<keyword id="KW-0068">Autocatalytic cleavage</keyword>
<keyword id="KW-0963">Cytoplasm</keyword>
<keyword id="KW-0378">Hydrolase</keyword>
<keyword id="KW-0645">Protease</keyword>
<keyword id="KW-0647">Proteasome</keyword>
<keyword id="KW-0888">Threonine protease</keyword>
<keyword id="KW-0865">Zymogen</keyword>
<evidence type="ECO:0000255" key="1">
    <source>
        <dbReference type="HAMAP-Rule" id="MF_02113"/>
    </source>
</evidence>
<name>PSB_MYCLB</name>
<dbReference type="EC" id="3.4.25.1" evidence="1"/>
<dbReference type="EMBL" id="FM211192">
    <property type="protein sequence ID" value="CAR71417.1"/>
    <property type="molecule type" value="Genomic_DNA"/>
</dbReference>
<dbReference type="SMR" id="B8ZRF3"/>
<dbReference type="MEROPS" id="T01.005"/>
<dbReference type="KEGG" id="mlb:MLBr01322"/>
<dbReference type="HOGENOM" id="CLU_035750_2_0_11"/>
<dbReference type="UniPathway" id="UPA00997"/>
<dbReference type="Proteomes" id="UP000006900">
    <property type="component" value="Chromosome"/>
</dbReference>
<dbReference type="GO" id="GO:0005737">
    <property type="term" value="C:cytoplasm"/>
    <property type="evidence" value="ECO:0007669"/>
    <property type="project" value="UniProtKB-SubCell"/>
</dbReference>
<dbReference type="GO" id="GO:0019774">
    <property type="term" value="C:proteasome core complex, beta-subunit complex"/>
    <property type="evidence" value="ECO:0007669"/>
    <property type="project" value="UniProtKB-UniRule"/>
</dbReference>
<dbReference type="GO" id="GO:0004298">
    <property type="term" value="F:threonine-type endopeptidase activity"/>
    <property type="evidence" value="ECO:0007669"/>
    <property type="project" value="UniProtKB-UniRule"/>
</dbReference>
<dbReference type="GO" id="GO:0019941">
    <property type="term" value="P:modification-dependent protein catabolic process"/>
    <property type="evidence" value="ECO:0007669"/>
    <property type="project" value="UniProtKB-UniRule"/>
</dbReference>
<dbReference type="GO" id="GO:0010498">
    <property type="term" value="P:proteasomal protein catabolic process"/>
    <property type="evidence" value="ECO:0007669"/>
    <property type="project" value="UniProtKB-UniRule"/>
</dbReference>
<dbReference type="CDD" id="cd01906">
    <property type="entry name" value="proteasome_protease_HslV"/>
    <property type="match status" value="1"/>
</dbReference>
<dbReference type="FunFam" id="3.60.20.10:FF:000046">
    <property type="entry name" value="Proteasome subunit beta"/>
    <property type="match status" value="1"/>
</dbReference>
<dbReference type="Gene3D" id="3.60.20.10">
    <property type="entry name" value="Glutamine Phosphoribosylpyrophosphate, subunit 1, domain 1"/>
    <property type="match status" value="1"/>
</dbReference>
<dbReference type="HAMAP" id="MF_02113_B">
    <property type="entry name" value="Proteasome_B_B"/>
    <property type="match status" value="1"/>
</dbReference>
<dbReference type="InterPro" id="IPR029055">
    <property type="entry name" value="Ntn_hydrolases_N"/>
</dbReference>
<dbReference type="InterPro" id="IPR001353">
    <property type="entry name" value="Proteasome_sua/b"/>
</dbReference>
<dbReference type="InterPro" id="IPR023333">
    <property type="entry name" value="Proteasome_suB-type"/>
</dbReference>
<dbReference type="InterPro" id="IPR022483">
    <property type="entry name" value="PSB_actinobac"/>
</dbReference>
<dbReference type="NCBIfam" id="TIGR03690">
    <property type="entry name" value="20S_bact_beta"/>
    <property type="match status" value="1"/>
</dbReference>
<dbReference type="PANTHER" id="PTHR32194:SF0">
    <property type="entry name" value="ATP-DEPENDENT PROTEASE SUBUNIT HSLV"/>
    <property type="match status" value="1"/>
</dbReference>
<dbReference type="PANTHER" id="PTHR32194">
    <property type="entry name" value="METALLOPROTEASE TLDD"/>
    <property type="match status" value="1"/>
</dbReference>
<dbReference type="Pfam" id="PF00227">
    <property type="entry name" value="Proteasome"/>
    <property type="match status" value="1"/>
</dbReference>
<dbReference type="SUPFAM" id="SSF56235">
    <property type="entry name" value="N-terminal nucleophile aminohydrolases (Ntn hydrolases)"/>
    <property type="match status" value="1"/>
</dbReference>
<dbReference type="PROSITE" id="PS51476">
    <property type="entry name" value="PROTEASOME_BETA_2"/>
    <property type="match status" value="1"/>
</dbReference>
<accession>B8ZRF3</accession>
<proteinExistence type="inferred from homology"/>
<gene>
    <name evidence="1" type="primary">prcB</name>
    <name type="ordered locus">MLBr01322</name>
</gene>
<protein>
    <recommendedName>
        <fullName evidence="1">Proteasome subunit beta</fullName>
        <ecNumber evidence="1">3.4.25.1</ecNumber>
    </recommendedName>
    <alternativeName>
        <fullName evidence="1">20S proteasome beta subunit</fullName>
    </alternativeName>
    <alternativeName>
        <fullName evidence="1">Proteasome core protein PrcB</fullName>
    </alternativeName>
</protein>
<comment type="function">
    <text evidence="1">Component of the proteasome core, a large protease complex with broad specificity involved in protein degradation.</text>
</comment>
<comment type="catalytic activity">
    <reaction evidence="1">
        <text>Cleavage of peptide bonds with very broad specificity.</text>
        <dbReference type="EC" id="3.4.25.1"/>
    </reaction>
</comment>
<comment type="activity regulation">
    <text evidence="1">The formation of the proteasomal ATPase ARC-20S proteasome complex, likely via the docking of the C-termini of ARC into the intersubunit pockets in the alpha-rings, may trigger opening of the gate for substrate entry. Interconversion between the open-gate and close-gate conformations leads to a dynamic regulation of the 20S proteasome proteolysis activity.</text>
</comment>
<comment type="pathway">
    <text evidence="1">Protein degradation; proteasomal Pup-dependent pathway.</text>
</comment>
<comment type="subunit">
    <text evidence="1">The 20S proteasome core is composed of 14 alpha and 14 beta subunits that assemble into four stacked heptameric rings, resulting in a barrel-shaped structure. The two inner rings, each composed of seven catalytic beta subunits, are sandwiched by two outer rings, each composed of seven alpha subunits. The catalytic chamber with the active sites is on the inside of the barrel. Has a gated structure, the ends of the cylinder being occluded by the N-termini of the alpha-subunits. Is capped by the proteasome-associated ATPase, ARC.</text>
</comment>
<comment type="subcellular location">
    <subcellularLocation>
        <location evidence="1">Cytoplasm</location>
    </subcellularLocation>
</comment>
<comment type="similarity">
    <text evidence="1">Belongs to the peptidase T1B family.</text>
</comment>
<sequence length="291" mass="30639">MTRSFPDRLPTNLAFPGISVINQSSFVDLLRRQAPELLPVSLGGGQSGGGQQLSHGTTIVVLKYPGGVVIAGDRRSTQGNMIAGRDVRKVYITDDYTATGIAGIAAVAVEFARLYAVELEHYEKLEGVPLTFAGKVNRLAIMVRSNLTAAMQGLLALPLLAGYDIHAPDPQSAGRIVSFDAAGGWNIEEEGYQSVGSGSIFAKSSIKKLYSQVSDADSALRVAIEALYDAADDDSATGGPDLVRGIYPTAVTIGAEGAAEVTESRIAELAREIIESRSRAYTLGSFGGSEK</sequence>
<feature type="propeptide" id="PRO_0000397534" description="Removed in mature form; by autocatalysis" evidence="1">
    <location>
        <begin position="1"/>
        <end position="56"/>
    </location>
</feature>
<feature type="chain" id="PRO_0000397535" description="Proteasome subunit beta">
    <location>
        <begin position="57"/>
        <end position="291"/>
    </location>
</feature>
<feature type="active site" description="Nucleophile" evidence="1">
    <location>
        <position position="57"/>
    </location>
</feature>
<reference key="1">
    <citation type="journal article" date="2009" name="Nat. Genet.">
        <title>Comparative genomic and phylogeographic analysis of Mycobacterium leprae.</title>
        <authorList>
            <person name="Monot M."/>
            <person name="Honore N."/>
            <person name="Garnier T."/>
            <person name="Zidane N."/>
            <person name="Sherafi D."/>
            <person name="Paniz-Mondolfi A."/>
            <person name="Matsuoka M."/>
            <person name="Taylor G.M."/>
            <person name="Donoghue H.D."/>
            <person name="Bouwman A."/>
            <person name="Mays S."/>
            <person name="Watson C."/>
            <person name="Lockwood D."/>
            <person name="Khamispour A."/>
            <person name="Dowlati Y."/>
            <person name="Jianping S."/>
            <person name="Rea T.H."/>
            <person name="Vera-Cabrera L."/>
            <person name="Stefani M.M."/>
            <person name="Banu S."/>
            <person name="Macdonald M."/>
            <person name="Sapkota B.R."/>
            <person name="Spencer J.S."/>
            <person name="Thomas J."/>
            <person name="Harshman K."/>
            <person name="Singh P."/>
            <person name="Busso P."/>
            <person name="Gattiker A."/>
            <person name="Rougemont J."/>
            <person name="Brennan P.J."/>
            <person name="Cole S.T."/>
        </authorList>
    </citation>
    <scope>NUCLEOTIDE SEQUENCE [LARGE SCALE GENOMIC DNA]</scope>
    <source>
        <strain>Br4923</strain>
    </source>
</reference>
<organism>
    <name type="scientific">Mycobacterium leprae (strain Br4923)</name>
    <dbReference type="NCBI Taxonomy" id="561304"/>
    <lineage>
        <taxon>Bacteria</taxon>
        <taxon>Bacillati</taxon>
        <taxon>Actinomycetota</taxon>
        <taxon>Actinomycetes</taxon>
        <taxon>Mycobacteriales</taxon>
        <taxon>Mycobacteriaceae</taxon>
        <taxon>Mycobacterium</taxon>
    </lineage>
</organism>